<evidence type="ECO:0000250" key="1"/>
<evidence type="ECO:0000255" key="2"/>
<evidence type="ECO:0000305" key="3"/>
<accession>Q3KLY4</accession>
<keyword id="KW-0029">Amino-acid transport</keyword>
<keyword id="KW-0998">Cell outer membrane</keyword>
<keyword id="KW-0406">Ion transport</keyword>
<keyword id="KW-0472">Membrane</keyword>
<keyword id="KW-0626">Porin</keyword>
<keyword id="KW-0732">Signal</keyword>
<keyword id="KW-0812">Transmembrane</keyword>
<keyword id="KW-1134">Transmembrane beta strand</keyword>
<keyword id="KW-0813">Transport</keyword>
<keyword id="KW-0843">Virulence</keyword>
<reference key="1">
    <citation type="journal article" date="2005" name="Infect. Immun.">
        <title>Comparative genomic analysis of Chlamydia trachomatis oculotropic and genitotropic strains.</title>
        <authorList>
            <person name="Carlson J.H."/>
            <person name="Porcella S.F."/>
            <person name="McClarty G."/>
            <person name="Caldwell H.D."/>
        </authorList>
    </citation>
    <scope>NUCLEOTIDE SEQUENCE [LARGE SCALE GENOMIC DNA]</scope>
    <source>
        <strain>ATCC VR-571B / DSM 19440 / HAR-13</strain>
    </source>
</reference>
<name>AAXA_CHLTA</name>
<gene>
    <name type="primary">aaxA</name>
    <name type="ordered locus">CTA_0404</name>
</gene>
<dbReference type="EMBL" id="CP000051">
    <property type="protein sequence ID" value="AAX50638.1"/>
    <property type="status" value="ALT_INIT"/>
    <property type="molecule type" value="Genomic_DNA"/>
</dbReference>
<dbReference type="KEGG" id="cta:CTA_0404"/>
<dbReference type="HOGENOM" id="CLU_619231_0_0_0"/>
<dbReference type="Proteomes" id="UP000002532">
    <property type="component" value="Chromosome"/>
</dbReference>
<dbReference type="GO" id="GO:0009279">
    <property type="term" value="C:cell outer membrane"/>
    <property type="evidence" value="ECO:0007669"/>
    <property type="project" value="UniProtKB-SubCell"/>
</dbReference>
<dbReference type="GO" id="GO:0046930">
    <property type="term" value="C:pore complex"/>
    <property type="evidence" value="ECO:0007669"/>
    <property type="project" value="UniProtKB-KW"/>
</dbReference>
<dbReference type="GO" id="GO:0015288">
    <property type="term" value="F:porin activity"/>
    <property type="evidence" value="ECO:0007669"/>
    <property type="project" value="UniProtKB-KW"/>
</dbReference>
<dbReference type="GO" id="GO:0006865">
    <property type="term" value="P:amino acid transport"/>
    <property type="evidence" value="ECO:0007669"/>
    <property type="project" value="UniProtKB-KW"/>
</dbReference>
<dbReference type="GO" id="GO:0008643">
    <property type="term" value="P:carbohydrate transport"/>
    <property type="evidence" value="ECO:0007669"/>
    <property type="project" value="InterPro"/>
</dbReference>
<dbReference type="GO" id="GO:0006811">
    <property type="term" value="P:monoatomic ion transport"/>
    <property type="evidence" value="ECO:0007669"/>
    <property type="project" value="UniProtKB-KW"/>
</dbReference>
<dbReference type="Gene3D" id="2.40.160.180">
    <property type="entry name" value="Carbohydrate-selective porin OprB"/>
    <property type="match status" value="1"/>
</dbReference>
<dbReference type="InterPro" id="IPR007049">
    <property type="entry name" value="Carb-sel_porin_OprB"/>
</dbReference>
<dbReference type="InterPro" id="IPR038673">
    <property type="entry name" value="OprB_sf"/>
</dbReference>
<dbReference type="Pfam" id="PF04966">
    <property type="entry name" value="OprB"/>
    <property type="match status" value="1"/>
</dbReference>
<protein>
    <recommendedName>
        <fullName>Porin AaxA</fullName>
    </recommendedName>
    <alternativeName>
        <fullName>Outer membrane protein AaxA</fullName>
    </alternativeName>
</protein>
<organism>
    <name type="scientific">Chlamydia trachomatis serovar A (strain ATCC VR-571B / DSM 19440 / HAR-13)</name>
    <dbReference type="NCBI Taxonomy" id="315277"/>
    <lineage>
        <taxon>Bacteria</taxon>
        <taxon>Pseudomonadati</taxon>
        <taxon>Chlamydiota</taxon>
        <taxon>Chlamydiia</taxon>
        <taxon>Chlamydiales</taxon>
        <taxon>Chlamydiaceae</taxon>
        <taxon>Chlamydia/Chlamydophila group</taxon>
        <taxon>Chlamydia</taxon>
    </lineage>
</organism>
<proteinExistence type="inferred from homology"/>
<feature type="signal peptide" evidence="2">
    <location>
        <begin position="1"/>
        <end position="22"/>
    </location>
</feature>
<feature type="chain" id="PRO_0000363187" description="Porin AaxA">
    <location>
        <begin position="23"/>
        <end position="461"/>
    </location>
</feature>
<comment type="function">
    <text evidence="1">Facilitates L-arginine uptake, as part of the AaxABC system. The arginine uptake by the bacterium in the macrophage may be a virulence factor against the host innate immune response (By similarity).</text>
</comment>
<comment type="subcellular location">
    <subcellularLocation>
        <location evidence="1">Cell outer membrane</location>
        <topology evidence="1">Multi-pass membrane protein</topology>
    </subcellularLocation>
</comment>
<comment type="similarity">
    <text evidence="3">Belongs to the OprB family.</text>
</comment>
<comment type="sequence caution" evidence="3">
    <conflict type="erroneous initiation">
        <sequence resource="EMBL-CDS" id="AAX50638"/>
    </conflict>
</comment>
<sequence length="461" mass="51466">MSFRSVLLTALLSLSFTTTMQAAHHHYHRYTDKLHRQNHKKDLISPKPTEQEACNTSSLSKELIPLSEQRGLLSPICDFISERPCLHGVSVRNLKQALKNSAGTQIALDWSILPQWFNPRVSHAPKLSIRDFGYSAHQTVTEATPPCWQNCFNPSAAVTIYDSSYGKGVFQISYTLVRYWRENAATAGDAMMLAGSINDYPSRQNIFSQFTFSQNFPNERVSLTIGQYSLYAIDGTLYNNDQQLGFISYALSQNPTATYSSGSLGAYLQVAPTASTSLQIGFQDAYNISGSSIKWSNLTKNRYNFHGFASWAPRCCLGSGQYSVLLYVTRQVPEQMEQTMGWSVNASQYISSKLYVFGRYSGVTGHVFPINRTYSFGMASANLFNRNPQDLFGIACAFNNVHLSASPNTKRKYETVIEGFAAIGCGPYLSFAPDFQLYLYPALRPNKQSARVYSVRANLAI</sequence>